<gene>
    <name type="ordered locus">SaurJH1_1431</name>
</gene>
<keyword id="KW-1003">Cell membrane</keyword>
<keyword id="KW-0472">Membrane</keyword>
<keyword id="KW-0812">Transmembrane</keyword>
<keyword id="KW-1133">Transmembrane helix</keyword>
<sequence>MATWLAIIFIVAALILGLIGGFLLARKYMMDYLKKNPPINEEMLRMMMMQMGQKPSQKKINQMMTMMNKNMDQNMKSAKK</sequence>
<comment type="subcellular location">
    <subcellularLocation>
        <location evidence="1">Cell membrane</location>
        <topology evidence="1">Single-pass membrane protein</topology>
    </subcellularLocation>
</comment>
<comment type="similarity">
    <text evidence="1">Belongs to the UPF0154 family.</text>
</comment>
<feature type="chain" id="PRO_1000079572" description="UPF0154 protein SaurJH1_1431">
    <location>
        <begin position="1"/>
        <end position="80"/>
    </location>
</feature>
<feature type="transmembrane region" description="Helical" evidence="1">
    <location>
        <begin position="4"/>
        <end position="24"/>
    </location>
</feature>
<reference key="1">
    <citation type="submission" date="2007-06" db="EMBL/GenBank/DDBJ databases">
        <title>Complete sequence of chromosome of Staphylococcus aureus subsp. aureus JH1.</title>
        <authorList>
            <consortium name="US DOE Joint Genome Institute"/>
            <person name="Copeland A."/>
            <person name="Lucas S."/>
            <person name="Lapidus A."/>
            <person name="Barry K."/>
            <person name="Detter J.C."/>
            <person name="Glavina del Rio T."/>
            <person name="Hammon N."/>
            <person name="Israni S."/>
            <person name="Dalin E."/>
            <person name="Tice H."/>
            <person name="Pitluck S."/>
            <person name="Chain P."/>
            <person name="Malfatti S."/>
            <person name="Shin M."/>
            <person name="Vergez L."/>
            <person name="Schmutz J."/>
            <person name="Larimer F."/>
            <person name="Land M."/>
            <person name="Hauser L."/>
            <person name="Kyrpides N."/>
            <person name="Ivanova N."/>
            <person name="Tomasz A."/>
            <person name="Richardson P."/>
        </authorList>
    </citation>
    <scope>NUCLEOTIDE SEQUENCE [LARGE SCALE GENOMIC DNA]</scope>
    <source>
        <strain>JH1</strain>
    </source>
</reference>
<proteinExistence type="inferred from homology"/>
<dbReference type="EMBL" id="CP000736">
    <property type="protein sequence ID" value="ABR52281.1"/>
    <property type="molecule type" value="Genomic_DNA"/>
</dbReference>
<dbReference type="SMR" id="A6U1G3"/>
<dbReference type="KEGG" id="sah:SaurJH1_1431"/>
<dbReference type="HOGENOM" id="CLU_180108_0_1_9"/>
<dbReference type="GO" id="GO:0005886">
    <property type="term" value="C:plasma membrane"/>
    <property type="evidence" value="ECO:0007669"/>
    <property type="project" value="UniProtKB-SubCell"/>
</dbReference>
<dbReference type="Gene3D" id="1.10.238.10">
    <property type="entry name" value="EF-hand"/>
    <property type="match status" value="1"/>
</dbReference>
<dbReference type="HAMAP" id="MF_00363">
    <property type="entry name" value="UPF0154"/>
    <property type="match status" value="1"/>
</dbReference>
<dbReference type="InterPro" id="IPR011992">
    <property type="entry name" value="EF-hand-dom_pair"/>
</dbReference>
<dbReference type="InterPro" id="IPR005359">
    <property type="entry name" value="UPF0154"/>
</dbReference>
<dbReference type="Pfam" id="PF03672">
    <property type="entry name" value="UPF0154"/>
    <property type="match status" value="1"/>
</dbReference>
<dbReference type="SUPFAM" id="SSF47473">
    <property type="entry name" value="EF-hand"/>
    <property type="match status" value="1"/>
</dbReference>
<evidence type="ECO:0000255" key="1">
    <source>
        <dbReference type="HAMAP-Rule" id="MF_00363"/>
    </source>
</evidence>
<accession>A6U1G3</accession>
<organism>
    <name type="scientific">Staphylococcus aureus (strain JH1)</name>
    <dbReference type="NCBI Taxonomy" id="359787"/>
    <lineage>
        <taxon>Bacteria</taxon>
        <taxon>Bacillati</taxon>
        <taxon>Bacillota</taxon>
        <taxon>Bacilli</taxon>
        <taxon>Bacillales</taxon>
        <taxon>Staphylococcaceae</taxon>
        <taxon>Staphylococcus</taxon>
    </lineage>
</organism>
<name>Y1431_STAA2</name>
<protein>
    <recommendedName>
        <fullName evidence="1">UPF0154 protein SaurJH1_1431</fullName>
    </recommendedName>
</protein>